<accession>Q32CB4</accession>
<name>FUCM_SHIDS</name>
<keyword id="KW-0119">Carbohydrate metabolism</keyword>
<keyword id="KW-0963">Cytoplasm</keyword>
<keyword id="KW-0294">Fucose metabolism</keyword>
<keyword id="KW-0413">Isomerase</keyword>
<keyword id="KW-1185">Reference proteome</keyword>
<sequence>MLKTISPLISPELLKVLAEMGHGDEIIFSDAHFPAHSMGPQVIRADGLLVSDLLQAIIPLFELDSYAPPLVMMAAVEGDTLDPEVERRYRNALSLQAPCPDIIRINRFAFYERAQKAFAIVITGERAKYGNILLKKGVTP</sequence>
<evidence type="ECO:0000255" key="1">
    <source>
        <dbReference type="HAMAP-Rule" id="MF_01662"/>
    </source>
</evidence>
<gene>
    <name evidence="1" type="primary">fucU</name>
    <name type="ordered locus">SDY_3022</name>
</gene>
<organism>
    <name type="scientific">Shigella dysenteriae serotype 1 (strain Sd197)</name>
    <dbReference type="NCBI Taxonomy" id="300267"/>
    <lineage>
        <taxon>Bacteria</taxon>
        <taxon>Pseudomonadati</taxon>
        <taxon>Pseudomonadota</taxon>
        <taxon>Gammaproteobacteria</taxon>
        <taxon>Enterobacterales</taxon>
        <taxon>Enterobacteriaceae</taxon>
        <taxon>Shigella</taxon>
    </lineage>
</organism>
<comment type="function">
    <text evidence="1">Involved in the anomeric conversion of L-fucose.</text>
</comment>
<comment type="catalytic activity">
    <reaction evidence="1">
        <text>alpha-L-fucose = beta-L-fucose</text>
        <dbReference type="Rhea" id="RHEA:25580"/>
        <dbReference type="ChEBI" id="CHEBI:42548"/>
        <dbReference type="ChEBI" id="CHEBI:42589"/>
        <dbReference type="EC" id="5.1.3.29"/>
    </reaction>
</comment>
<comment type="pathway">
    <text evidence="1">Carbohydrate metabolism; L-fucose metabolism.</text>
</comment>
<comment type="subunit">
    <text evidence="1">Homodecamer.</text>
</comment>
<comment type="subcellular location">
    <subcellularLocation>
        <location evidence="1">Cytoplasm</location>
    </subcellularLocation>
</comment>
<comment type="similarity">
    <text evidence="1">Belongs to the RbsD / FucU family. FucU mutarotase subfamily.</text>
</comment>
<protein>
    <recommendedName>
        <fullName evidence="1">L-fucose mutarotase</fullName>
        <ecNumber evidence="1">5.1.3.29</ecNumber>
    </recommendedName>
    <alternativeName>
        <fullName evidence="1">Fucose 1-epimerase</fullName>
    </alternativeName>
    <alternativeName>
        <fullName evidence="1">Type-2 mutarotase</fullName>
    </alternativeName>
</protein>
<feature type="chain" id="PRO_1000187206" description="L-fucose mutarotase">
    <location>
        <begin position="1"/>
        <end position="140"/>
    </location>
</feature>
<feature type="active site" description="Proton donor" evidence="1">
    <location>
        <position position="22"/>
    </location>
</feature>
<feature type="binding site" evidence="1">
    <location>
        <position position="30"/>
    </location>
    <ligand>
        <name>substrate</name>
    </ligand>
</feature>
<feature type="binding site" evidence="1">
    <location>
        <position position="107"/>
    </location>
    <ligand>
        <name>substrate</name>
    </ligand>
</feature>
<feature type="binding site" evidence="1">
    <location>
        <begin position="129"/>
        <end position="131"/>
    </location>
    <ligand>
        <name>substrate</name>
    </ligand>
</feature>
<reference key="1">
    <citation type="journal article" date="2005" name="Nucleic Acids Res.">
        <title>Genome dynamics and diversity of Shigella species, the etiologic agents of bacillary dysentery.</title>
        <authorList>
            <person name="Yang F."/>
            <person name="Yang J."/>
            <person name="Zhang X."/>
            <person name="Chen L."/>
            <person name="Jiang Y."/>
            <person name="Yan Y."/>
            <person name="Tang X."/>
            <person name="Wang J."/>
            <person name="Xiong Z."/>
            <person name="Dong J."/>
            <person name="Xue Y."/>
            <person name="Zhu Y."/>
            <person name="Xu X."/>
            <person name="Sun L."/>
            <person name="Chen S."/>
            <person name="Nie H."/>
            <person name="Peng J."/>
            <person name="Xu J."/>
            <person name="Wang Y."/>
            <person name="Yuan Z."/>
            <person name="Wen Y."/>
            <person name="Yao Z."/>
            <person name="Shen Y."/>
            <person name="Qiang B."/>
            <person name="Hou Y."/>
            <person name="Yu J."/>
            <person name="Jin Q."/>
        </authorList>
    </citation>
    <scope>NUCLEOTIDE SEQUENCE [LARGE SCALE GENOMIC DNA]</scope>
    <source>
        <strain>Sd197</strain>
    </source>
</reference>
<proteinExistence type="inferred from homology"/>
<dbReference type="EC" id="5.1.3.29" evidence="1"/>
<dbReference type="EMBL" id="CP000034">
    <property type="protein sequence ID" value="ABB63041.1"/>
    <property type="molecule type" value="Genomic_DNA"/>
</dbReference>
<dbReference type="RefSeq" id="WP_000920840.1">
    <property type="nucleotide sequence ID" value="NC_007606.1"/>
</dbReference>
<dbReference type="RefSeq" id="YP_404532.1">
    <property type="nucleotide sequence ID" value="NC_007606.1"/>
</dbReference>
<dbReference type="SMR" id="Q32CB4"/>
<dbReference type="STRING" id="300267.SDY_3022"/>
<dbReference type="EnsemblBacteria" id="ABB63041">
    <property type="protein sequence ID" value="ABB63041"/>
    <property type="gene ID" value="SDY_3022"/>
</dbReference>
<dbReference type="GeneID" id="93779194"/>
<dbReference type="KEGG" id="sdy:SDY_3022"/>
<dbReference type="PATRIC" id="fig|300267.13.peg.3628"/>
<dbReference type="HOGENOM" id="CLU_120075_1_0_6"/>
<dbReference type="UniPathway" id="UPA00956"/>
<dbReference type="Proteomes" id="UP000002716">
    <property type="component" value="Chromosome"/>
</dbReference>
<dbReference type="GO" id="GO:0005737">
    <property type="term" value="C:cytoplasm"/>
    <property type="evidence" value="ECO:0007669"/>
    <property type="project" value="UniProtKB-SubCell"/>
</dbReference>
<dbReference type="GO" id="GO:0042806">
    <property type="term" value="F:fucose binding"/>
    <property type="evidence" value="ECO:0007669"/>
    <property type="project" value="InterPro"/>
</dbReference>
<dbReference type="GO" id="GO:0036373">
    <property type="term" value="F:L-fucose mutarotase activity"/>
    <property type="evidence" value="ECO:0007669"/>
    <property type="project" value="UniProtKB-EC"/>
</dbReference>
<dbReference type="GO" id="GO:0036065">
    <property type="term" value="P:fucosylation"/>
    <property type="evidence" value="ECO:0007669"/>
    <property type="project" value="TreeGrafter"/>
</dbReference>
<dbReference type="GO" id="GO:0042354">
    <property type="term" value="P:L-fucose metabolic process"/>
    <property type="evidence" value="ECO:0007669"/>
    <property type="project" value="UniProtKB-UniRule"/>
</dbReference>
<dbReference type="FunFam" id="3.40.1650.10:FF:000001">
    <property type="entry name" value="L-fucose mutarotase"/>
    <property type="match status" value="1"/>
</dbReference>
<dbReference type="Gene3D" id="3.40.1650.10">
    <property type="entry name" value="RbsD-like domain"/>
    <property type="match status" value="1"/>
</dbReference>
<dbReference type="HAMAP" id="MF_01662">
    <property type="entry name" value="L_fucose_rotase"/>
    <property type="match status" value="1"/>
</dbReference>
<dbReference type="InterPro" id="IPR023751">
    <property type="entry name" value="L-fucose_mutarotase"/>
</dbReference>
<dbReference type="InterPro" id="IPR023750">
    <property type="entry name" value="RbsD-like_sf"/>
</dbReference>
<dbReference type="InterPro" id="IPR050443">
    <property type="entry name" value="RbsD/FucU_mutarotase"/>
</dbReference>
<dbReference type="InterPro" id="IPR007721">
    <property type="entry name" value="RbsD_FucU"/>
</dbReference>
<dbReference type="NCBIfam" id="NF011949">
    <property type="entry name" value="PRK15420.1"/>
    <property type="match status" value="1"/>
</dbReference>
<dbReference type="PANTHER" id="PTHR31690">
    <property type="entry name" value="FUCOSE MUTAROTASE"/>
    <property type="match status" value="1"/>
</dbReference>
<dbReference type="PANTHER" id="PTHR31690:SF4">
    <property type="entry name" value="FUCOSE MUTAROTASE"/>
    <property type="match status" value="1"/>
</dbReference>
<dbReference type="Pfam" id="PF05025">
    <property type="entry name" value="RbsD_FucU"/>
    <property type="match status" value="1"/>
</dbReference>
<dbReference type="SUPFAM" id="SSF102546">
    <property type="entry name" value="RbsD-like"/>
    <property type="match status" value="1"/>
</dbReference>